<evidence type="ECO:0000256" key="1">
    <source>
        <dbReference type="SAM" id="MobiDB-lite"/>
    </source>
</evidence>
<keyword id="KW-1185">Reference proteome</keyword>
<gene>
    <name type="ordered locus">TP_0927</name>
</gene>
<organism>
    <name type="scientific">Treponema pallidum (strain Nichols)</name>
    <dbReference type="NCBI Taxonomy" id="243276"/>
    <lineage>
        <taxon>Bacteria</taxon>
        <taxon>Pseudomonadati</taxon>
        <taxon>Spirochaetota</taxon>
        <taxon>Spirochaetia</taxon>
        <taxon>Spirochaetales</taxon>
        <taxon>Treponemataceae</taxon>
        <taxon>Treponema</taxon>
    </lineage>
</organism>
<protein>
    <recommendedName>
        <fullName>Uncharacterized protein TP_0927</fullName>
    </recommendedName>
</protein>
<feature type="chain" id="PRO_0000202353" description="Uncharacterized protein TP_0927">
    <location>
        <begin position="1"/>
        <end position="196"/>
    </location>
</feature>
<feature type="region of interest" description="Disordered" evidence="1">
    <location>
        <begin position="44"/>
        <end position="80"/>
    </location>
</feature>
<reference key="1">
    <citation type="journal article" date="1998" name="Science">
        <title>Complete genome sequence of Treponema pallidum, the syphilis spirochete.</title>
        <authorList>
            <person name="Fraser C.M."/>
            <person name="Norris S.J."/>
            <person name="Weinstock G.M."/>
            <person name="White O."/>
            <person name="Sutton G.G."/>
            <person name="Dodson R.J."/>
            <person name="Gwinn M.L."/>
            <person name="Hickey E.K."/>
            <person name="Clayton R.A."/>
            <person name="Ketchum K.A."/>
            <person name="Sodergren E."/>
            <person name="Hardham J.M."/>
            <person name="McLeod M.P."/>
            <person name="Salzberg S.L."/>
            <person name="Peterson J.D."/>
            <person name="Khalak H.G."/>
            <person name="Richardson D.L."/>
            <person name="Howell J.K."/>
            <person name="Chidambaram M."/>
            <person name="Utterback T.R."/>
            <person name="McDonald L.A."/>
            <person name="Artiach P."/>
            <person name="Bowman C."/>
            <person name="Cotton M.D."/>
            <person name="Fujii C."/>
            <person name="Garland S.A."/>
            <person name="Hatch B."/>
            <person name="Horst K."/>
            <person name="Roberts K.M."/>
            <person name="Sandusky M."/>
            <person name="Weidman J.F."/>
            <person name="Smith H.O."/>
            <person name="Venter J.C."/>
        </authorList>
    </citation>
    <scope>NUCLEOTIDE SEQUENCE [LARGE SCALE GENOMIC DNA]</scope>
    <source>
        <strain>Nichols</strain>
    </source>
</reference>
<name>Y927_TREPA</name>
<sequence length="196" mass="22215">MCIQCIYARRQKRQHAGAPLAHTLRRTAHTRMPLLQEQQAAQERSVAVPGTEGKKAQNLRQLPAARLTYPTSSSTRPSHARETLYPVSGRQDSAFSFSRNTVQANTQKHKISYRNTTVCRDRDGGFMQQYSIKSDPGETSHCSIVSQTEDGYIIRICRDRDGYKKVHEVHIHQSLFDLCRRTGFITAVRQNTDAVA</sequence>
<proteinExistence type="predicted"/>
<accession>O83897</accession>
<dbReference type="EMBL" id="AE000520">
    <property type="protein sequence ID" value="AAC65886.1"/>
    <property type="molecule type" value="Genomic_DNA"/>
</dbReference>
<dbReference type="PIR" id="H71263">
    <property type="entry name" value="H71263"/>
</dbReference>
<dbReference type="STRING" id="243276.TP_0927"/>
<dbReference type="EnsemblBacteria" id="AAC65886">
    <property type="protein sequence ID" value="AAC65886"/>
    <property type="gene ID" value="TP_0927"/>
</dbReference>
<dbReference type="KEGG" id="tpa:TP_0927"/>
<dbReference type="KEGG" id="tpw:TPANIC_0927"/>
<dbReference type="eggNOG" id="ENOG5031GYP">
    <property type="taxonomic scope" value="Bacteria"/>
</dbReference>
<dbReference type="HOGENOM" id="CLU_1389675_0_0_12"/>
<dbReference type="Proteomes" id="UP000000811">
    <property type="component" value="Chromosome"/>
</dbReference>